<accession>Q96LM5</accession>
<accession>A8MPU3</accession>
<accession>C9J0T8</accession>
<protein>
    <recommendedName>
        <fullName evidence="3">Protein SPMIP2</fullName>
    </recommendedName>
    <alternativeName>
        <fullName evidence="4">Sperm-associated microtubule inner protein 2</fullName>
    </alternativeName>
</protein>
<name>SMIP2_HUMAN</name>
<keyword id="KW-1267">Proteomics identification</keyword>
<keyword id="KW-1185">Reference proteome</keyword>
<comment type="interaction">
    <interactant intactId="EBI-12020542">
        <id>Q96LM5</id>
    </interactant>
    <interactant intactId="EBI-11524452">
        <id>Q8N9N5-2</id>
        <label>BANP</label>
    </interactant>
    <organismsDiffer>false</organismsDiffer>
    <experiments>3</experiments>
</comment>
<comment type="interaction">
    <interactant intactId="EBI-12020542">
        <id>Q96LM5</id>
    </interactant>
    <interactant intactId="EBI-765407">
        <id>P41182</id>
        <label>BCL6</label>
    </interactant>
    <organismsDiffer>false</organismsDiffer>
    <experiments>3</experiments>
</comment>
<comment type="interaction">
    <interactant intactId="EBI-12020542">
        <id>Q96LM5</id>
    </interactant>
    <interactant intactId="EBI-11983447">
        <id>Q8N9W6-4</id>
        <label>BOLL</label>
    </interactant>
    <organismsDiffer>false</organismsDiffer>
    <experiments>3</experiments>
</comment>
<comment type="interaction">
    <interactant intactId="EBI-12020542">
        <id>Q96LM5</id>
    </interactant>
    <interactant intactId="EBI-3866279">
        <id>Q9BWT7</id>
        <label>CARD10</label>
    </interactant>
    <organismsDiffer>false</organismsDiffer>
    <experiments>3</experiments>
</comment>
<comment type="interaction">
    <interactant intactId="EBI-12020542">
        <id>Q96LM5</id>
    </interactant>
    <interactant intactId="EBI-11977221">
        <id>Q86Z20</id>
        <label>CCDC125</label>
    </interactant>
    <organismsDiffer>false</organismsDiffer>
    <experiments>3</experiments>
</comment>
<comment type="interaction">
    <interactant intactId="EBI-12020542">
        <id>Q96LM5</id>
    </interactant>
    <interactant intactId="EBI-10961624">
        <id>Q2TAC2-2</id>
        <label>CCDC57</label>
    </interactant>
    <organismsDiffer>false</organismsDiffer>
    <experiments>3</experiments>
</comment>
<comment type="interaction">
    <interactant intactId="EBI-12020542">
        <id>Q96LM5</id>
    </interactant>
    <interactant intactId="EBI-3867333">
        <id>A8MQ03</id>
        <label>CYSRT1</label>
    </interactant>
    <organismsDiffer>false</organismsDiffer>
    <experiments>3</experiments>
</comment>
<comment type="interaction">
    <interactant intactId="EBI-12020542">
        <id>Q96LM5</id>
    </interactant>
    <interactant intactId="EBI-5353084">
        <id>O60662</id>
        <label>KLHL41</label>
    </interactant>
    <organismsDiffer>false</organismsDiffer>
    <experiments>3</experiments>
</comment>
<comment type="interaction">
    <interactant intactId="EBI-12020542">
        <id>Q96LM5</id>
    </interactant>
    <interactant intactId="EBI-10171697">
        <id>Q6A162</id>
        <label>KRT40</label>
    </interactant>
    <organismsDiffer>false</organismsDiffer>
    <experiments>3</experiments>
</comment>
<comment type="interaction">
    <interactant intactId="EBI-12020542">
        <id>Q96LM5</id>
    </interactant>
    <interactant intactId="EBI-726739">
        <id>Q9UPY8</id>
        <label>MAPRE3</label>
    </interactant>
    <organismsDiffer>false</organismsDiffer>
    <experiments>3</experiments>
</comment>
<comment type="interaction">
    <interactant intactId="EBI-12020542">
        <id>Q96LM5</id>
    </interactant>
    <interactant intactId="EBI-724076">
        <id>Q99750</id>
        <label>MDFI</label>
    </interactant>
    <organismsDiffer>false</organismsDiffer>
    <experiments>3</experiments>
</comment>
<comment type="interaction">
    <interactant intactId="EBI-12020542">
        <id>Q96LM5</id>
    </interactant>
    <interactant intactId="EBI-742459">
        <id>Q9BU76</id>
        <label>MMTAG2</label>
    </interactant>
    <organismsDiffer>false</organismsDiffer>
    <experiments>3</experiments>
</comment>
<comment type="interaction">
    <interactant intactId="EBI-12020542">
        <id>Q96LM5</id>
    </interactant>
    <interactant intactId="EBI-10271199">
        <id>Q8NI38</id>
        <label>NFKBID</label>
    </interactant>
    <organismsDiffer>false</organismsDiffer>
    <experiments>3</experiments>
</comment>
<comment type="interaction">
    <interactant intactId="EBI-12020542">
        <id>Q96LM5</id>
    </interactant>
    <interactant intactId="EBI-357275">
        <id>Q99471</id>
        <label>PFDN5</label>
    </interactant>
    <organismsDiffer>false</organismsDiffer>
    <experiments>3</experiments>
</comment>
<comment type="interaction">
    <interactant intactId="EBI-12020542">
        <id>Q96LM5</id>
    </interactant>
    <interactant intactId="EBI-1055079">
        <id>O15160</id>
        <label>POLR1C</label>
    </interactant>
    <organismsDiffer>false</organismsDiffer>
    <experiments>3</experiments>
</comment>
<comment type="interaction">
    <interactant intactId="EBI-12020542">
        <id>Q96LM5</id>
    </interactant>
    <interactant intactId="EBI-5280197">
        <id>O75400-2</id>
        <label>PRPF40A</label>
    </interactant>
    <organismsDiffer>false</organismsDiffer>
    <experiments>3</experiments>
</comment>
<comment type="interaction">
    <interactant intactId="EBI-12020542">
        <id>Q96LM5</id>
    </interactant>
    <interactant intactId="EBI-10268630">
        <id>Q8N9Q2</id>
        <label>SREK1IP1</label>
    </interactant>
    <organismsDiffer>false</organismsDiffer>
    <experiments>3</experiments>
</comment>
<comment type="interaction">
    <interactant intactId="EBI-12020542">
        <id>Q96LM5</id>
    </interactant>
    <interactant intactId="EBI-741515">
        <id>Q9NVV9</id>
        <label>THAP1</label>
    </interactant>
    <organismsDiffer>false</organismsDiffer>
    <experiments>3</experiments>
</comment>
<comment type="interaction">
    <interactant intactId="EBI-12020542">
        <id>Q96LM5</id>
    </interactant>
    <interactant intactId="EBI-359224">
        <id>Q13077</id>
        <label>TRAF1</label>
    </interactant>
    <organismsDiffer>false</organismsDiffer>
    <experiments>3</experiments>
</comment>
<comment type="interaction">
    <interactant intactId="EBI-12020542">
        <id>Q96LM5</id>
    </interactant>
    <interactant intactId="EBI-11525489">
        <id>Q86WT6-2</id>
        <label>TRIM69</label>
    </interactant>
    <organismsDiffer>false</organismsDiffer>
    <experiments>3</experiments>
</comment>
<comment type="interaction">
    <interactant intactId="EBI-12020542">
        <id>Q96LM5</id>
    </interactant>
    <interactant intactId="EBI-744471">
        <id>O43167</id>
        <label>ZBTB24</label>
    </interactant>
    <organismsDiffer>false</organismsDiffer>
    <experiments>3</experiments>
</comment>
<comment type="sequence caution" evidence="3">
    <conflict type="frameshift">
        <sequence resource="EMBL-CDS" id="BAB71665"/>
    </conflict>
</comment>
<sequence length="186" mass="21723">MASVSYQKPTSTTVGKQMIFTGPDYIKDYLPKIHQHTSYVGEQHLALEKTGDLRYLWRPASNRSLPAKYKHEYVSEIGWRIPQYNFINKSRLGSGFHIKYEELSQASLDSITHRYQNPWQPKPHVLDMQGKQSRASFAWHMSAFEDTDQRNSKWAILVRQCKSSLPRASKPPKLPKLPKKEKKRKH</sequence>
<reference key="1">
    <citation type="journal article" date="2004" name="Nat. Genet.">
        <title>Complete sequencing and characterization of 21,243 full-length human cDNAs.</title>
        <authorList>
            <person name="Ota T."/>
            <person name="Suzuki Y."/>
            <person name="Nishikawa T."/>
            <person name="Otsuki T."/>
            <person name="Sugiyama T."/>
            <person name="Irie R."/>
            <person name="Wakamatsu A."/>
            <person name="Hayashi K."/>
            <person name="Sato H."/>
            <person name="Nagai K."/>
            <person name="Kimura K."/>
            <person name="Makita H."/>
            <person name="Sekine M."/>
            <person name="Obayashi M."/>
            <person name="Nishi T."/>
            <person name="Shibahara T."/>
            <person name="Tanaka T."/>
            <person name="Ishii S."/>
            <person name="Yamamoto J."/>
            <person name="Saito K."/>
            <person name="Kawai Y."/>
            <person name="Isono Y."/>
            <person name="Nakamura Y."/>
            <person name="Nagahari K."/>
            <person name="Murakami K."/>
            <person name="Yasuda T."/>
            <person name="Iwayanagi T."/>
            <person name="Wagatsuma M."/>
            <person name="Shiratori A."/>
            <person name="Sudo H."/>
            <person name="Hosoiri T."/>
            <person name="Kaku Y."/>
            <person name="Kodaira H."/>
            <person name="Kondo H."/>
            <person name="Sugawara M."/>
            <person name="Takahashi M."/>
            <person name="Kanda K."/>
            <person name="Yokoi T."/>
            <person name="Furuya T."/>
            <person name="Kikkawa E."/>
            <person name="Omura Y."/>
            <person name="Abe K."/>
            <person name="Kamihara K."/>
            <person name="Katsuta N."/>
            <person name="Sato K."/>
            <person name="Tanikawa M."/>
            <person name="Yamazaki M."/>
            <person name="Ninomiya K."/>
            <person name="Ishibashi T."/>
            <person name="Yamashita H."/>
            <person name="Murakawa K."/>
            <person name="Fujimori K."/>
            <person name="Tanai H."/>
            <person name="Kimata M."/>
            <person name="Watanabe M."/>
            <person name="Hiraoka S."/>
            <person name="Chiba Y."/>
            <person name="Ishida S."/>
            <person name="Ono Y."/>
            <person name="Takiguchi S."/>
            <person name="Watanabe S."/>
            <person name="Yosida M."/>
            <person name="Hotuta T."/>
            <person name="Kusano J."/>
            <person name="Kanehori K."/>
            <person name="Takahashi-Fujii A."/>
            <person name="Hara H."/>
            <person name="Tanase T.-O."/>
            <person name="Nomura Y."/>
            <person name="Togiya S."/>
            <person name="Komai F."/>
            <person name="Hara R."/>
            <person name="Takeuchi K."/>
            <person name="Arita M."/>
            <person name="Imose N."/>
            <person name="Musashino K."/>
            <person name="Yuuki H."/>
            <person name="Oshima A."/>
            <person name="Sasaki N."/>
            <person name="Aotsuka S."/>
            <person name="Yoshikawa Y."/>
            <person name="Matsunawa H."/>
            <person name="Ichihara T."/>
            <person name="Shiohata N."/>
            <person name="Sano S."/>
            <person name="Moriya S."/>
            <person name="Momiyama H."/>
            <person name="Satoh N."/>
            <person name="Takami S."/>
            <person name="Terashima Y."/>
            <person name="Suzuki O."/>
            <person name="Nakagawa S."/>
            <person name="Senoh A."/>
            <person name="Mizoguchi H."/>
            <person name="Goto Y."/>
            <person name="Shimizu F."/>
            <person name="Wakebe H."/>
            <person name="Hishigaki H."/>
            <person name="Watanabe T."/>
            <person name="Sugiyama A."/>
            <person name="Takemoto M."/>
            <person name="Kawakami B."/>
            <person name="Yamazaki M."/>
            <person name="Watanabe K."/>
            <person name="Kumagai A."/>
            <person name="Itakura S."/>
            <person name="Fukuzumi Y."/>
            <person name="Fujimori Y."/>
            <person name="Komiyama M."/>
            <person name="Tashiro H."/>
            <person name="Tanigami A."/>
            <person name="Fujiwara T."/>
            <person name="Ono T."/>
            <person name="Yamada K."/>
            <person name="Fujii Y."/>
            <person name="Ozaki K."/>
            <person name="Hirao M."/>
            <person name="Ohmori Y."/>
            <person name="Kawabata A."/>
            <person name="Hikiji T."/>
            <person name="Kobatake N."/>
            <person name="Inagaki H."/>
            <person name="Ikema Y."/>
            <person name="Okamoto S."/>
            <person name="Okitani R."/>
            <person name="Kawakami T."/>
            <person name="Noguchi S."/>
            <person name="Itoh T."/>
            <person name="Shigeta K."/>
            <person name="Senba T."/>
            <person name="Matsumura K."/>
            <person name="Nakajima Y."/>
            <person name="Mizuno T."/>
            <person name="Morinaga M."/>
            <person name="Sasaki M."/>
            <person name="Togashi T."/>
            <person name="Oyama M."/>
            <person name="Hata H."/>
            <person name="Watanabe M."/>
            <person name="Komatsu T."/>
            <person name="Mizushima-Sugano J."/>
            <person name="Satoh T."/>
            <person name="Shirai Y."/>
            <person name="Takahashi Y."/>
            <person name="Nakagawa K."/>
            <person name="Okumura K."/>
            <person name="Nagase T."/>
            <person name="Nomura N."/>
            <person name="Kikuchi H."/>
            <person name="Masuho Y."/>
            <person name="Yamashita R."/>
            <person name="Nakai K."/>
            <person name="Yada T."/>
            <person name="Nakamura Y."/>
            <person name="Ohara O."/>
            <person name="Isogai T."/>
            <person name="Sugano S."/>
        </authorList>
    </citation>
    <scope>NUCLEOTIDE SEQUENCE [LARGE SCALE MRNA]</scope>
    <scope>VARIANTS GLY-75 AND GLU-93</scope>
    <source>
        <tissue>Testis</tissue>
    </source>
</reference>
<reference key="2">
    <citation type="journal article" date="2005" name="Nature">
        <title>Generation and annotation of the DNA sequences of human chromosomes 2 and 4.</title>
        <authorList>
            <person name="Hillier L.W."/>
            <person name="Graves T.A."/>
            <person name="Fulton R.S."/>
            <person name="Fulton L.A."/>
            <person name="Pepin K.H."/>
            <person name="Minx P."/>
            <person name="Wagner-McPherson C."/>
            <person name="Layman D."/>
            <person name="Wylie K."/>
            <person name="Sekhon M."/>
            <person name="Becker M.C."/>
            <person name="Fewell G.A."/>
            <person name="Delehaunty K.D."/>
            <person name="Miner T.L."/>
            <person name="Nash W.E."/>
            <person name="Kremitzki C."/>
            <person name="Oddy L."/>
            <person name="Du H."/>
            <person name="Sun H."/>
            <person name="Bradshaw-Cordum H."/>
            <person name="Ali J."/>
            <person name="Carter J."/>
            <person name="Cordes M."/>
            <person name="Harris A."/>
            <person name="Isak A."/>
            <person name="van Brunt A."/>
            <person name="Nguyen C."/>
            <person name="Du F."/>
            <person name="Courtney L."/>
            <person name="Kalicki J."/>
            <person name="Ozersky P."/>
            <person name="Abbott S."/>
            <person name="Armstrong J."/>
            <person name="Belter E.A."/>
            <person name="Caruso L."/>
            <person name="Cedroni M."/>
            <person name="Cotton M."/>
            <person name="Davidson T."/>
            <person name="Desai A."/>
            <person name="Elliott G."/>
            <person name="Erb T."/>
            <person name="Fronick C."/>
            <person name="Gaige T."/>
            <person name="Haakenson W."/>
            <person name="Haglund K."/>
            <person name="Holmes A."/>
            <person name="Harkins R."/>
            <person name="Kim K."/>
            <person name="Kruchowski S.S."/>
            <person name="Strong C.M."/>
            <person name="Grewal N."/>
            <person name="Goyea E."/>
            <person name="Hou S."/>
            <person name="Levy A."/>
            <person name="Martinka S."/>
            <person name="Mead K."/>
            <person name="McLellan M.D."/>
            <person name="Meyer R."/>
            <person name="Randall-Maher J."/>
            <person name="Tomlinson C."/>
            <person name="Dauphin-Kohlberg S."/>
            <person name="Kozlowicz-Reilly A."/>
            <person name="Shah N."/>
            <person name="Swearengen-Shahid S."/>
            <person name="Snider J."/>
            <person name="Strong J.T."/>
            <person name="Thompson J."/>
            <person name="Yoakum M."/>
            <person name="Leonard S."/>
            <person name="Pearman C."/>
            <person name="Trani L."/>
            <person name="Radionenko M."/>
            <person name="Waligorski J.E."/>
            <person name="Wang C."/>
            <person name="Rock S.M."/>
            <person name="Tin-Wollam A.-M."/>
            <person name="Maupin R."/>
            <person name="Latreille P."/>
            <person name="Wendl M.C."/>
            <person name="Yang S.-P."/>
            <person name="Pohl C."/>
            <person name="Wallis J.W."/>
            <person name="Spieth J."/>
            <person name="Bieri T.A."/>
            <person name="Berkowicz N."/>
            <person name="Nelson J.O."/>
            <person name="Osborne J."/>
            <person name="Ding L."/>
            <person name="Meyer R."/>
            <person name="Sabo A."/>
            <person name="Shotland Y."/>
            <person name="Sinha P."/>
            <person name="Wohldmann P.E."/>
            <person name="Cook L.L."/>
            <person name="Hickenbotham M.T."/>
            <person name="Eldred J."/>
            <person name="Williams D."/>
            <person name="Jones T.A."/>
            <person name="She X."/>
            <person name="Ciccarelli F.D."/>
            <person name="Izaurralde E."/>
            <person name="Taylor J."/>
            <person name="Schmutz J."/>
            <person name="Myers R.M."/>
            <person name="Cox D.R."/>
            <person name="Huang X."/>
            <person name="McPherson J.D."/>
            <person name="Mardis E.R."/>
            <person name="Clifton S.W."/>
            <person name="Warren W.C."/>
            <person name="Chinwalla A.T."/>
            <person name="Eddy S.R."/>
            <person name="Marra M.A."/>
            <person name="Ovcharenko I."/>
            <person name="Furey T.S."/>
            <person name="Miller W."/>
            <person name="Eichler E.E."/>
            <person name="Bork P."/>
            <person name="Suyama M."/>
            <person name="Torrents D."/>
            <person name="Waterston R.H."/>
            <person name="Wilson R.K."/>
        </authorList>
    </citation>
    <scope>NUCLEOTIDE SEQUENCE [LARGE SCALE GENOMIC DNA]</scope>
</reference>
<organism>
    <name type="scientific">Homo sapiens</name>
    <name type="common">Human</name>
    <dbReference type="NCBI Taxonomy" id="9606"/>
    <lineage>
        <taxon>Eukaryota</taxon>
        <taxon>Metazoa</taxon>
        <taxon>Chordata</taxon>
        <taxon>Craniata</taxon>
        <taxon>Vertebrata</taxon>
        <taxon>Euteleostomi</taxon>
        <taxon>Mammalia</taxon>
        <taxon>Eutheria</taxon>
        <taxon>Euarchontoglires</taxon>
        <taxon>Primates</taxon>
        <taxon>Haplorrhini</taxon>
        <taxon>Catarrhini</taxon>
        <taxon>Hominidae</taxon>
        <taxon>Homo</taxon>
    </lineage>
</organism>
<gene>
    <name evidence="4" type="primary">SPMIP2</name>
    <name type="synonym">C4orf45</name>
</gene>
<dbReference type="EMBL" id="AK058100">
    <property type="protein sequence ID" value="BAB71665.1"/>
    <property type="status" value="ALT_FRAME"/>
    <property type="molecule type" value="mRNA"/>
</dbReference>
<dbReference type="EMBL" id="AC093700">
    <property type="status" value="NOT_ANNOTATED_CDS"/>
    <property type="molecule type" value="Genomic_DNA"/>
</dbReference>
<dbReference type="EMBL" id="AC109823">
    <property type="status" value="NOT_ANNOTATED_CDS"/>
    <property type="molecule type" value="Genomic_DNA"/>
</dbReference>
<dbReference type="CCDS" id="CCDS47156.1"/>
<dbReference type="RefSeq" id="NP_689756.2">
    <property type="nucleotide sequence ID" value="NM_152543.3"/>
</dbReference>
<dbReference type="RefSeq" id="XP_016863297.1">
    <property type="nucleotide sequence ID" value="XM_017007808.1"/>
</dbReference>
<dbReference type="RefSeq" id="XP_016863298.1">
    <property type="nucleotide sequence ID" value="XM_017007809.2"/>
</dbReference>
<dbReference type="RefSeq" id="XP_016863299.1">
    <property type="nucleotide sequence ID" value="XM_017007810.1"/>
</dbReference>
<dbReference type="RefSeq" id="XP_047305632.1">
    <property type="nucleotide sequence ID" value="XM_047449676.1"/>
</dbReference>
<dbReference type="SMR" id="Q96LM5"/>
<dbReference type="BioGRID" id="127473">
    <property type="interactions" value="22"/>
</dbReference>
<dbReference type="FunCoup" id="Q96LM5">
    <property type="interactions" value="6"/>
</dbReference>
<dbReference type="IntAct" id="Q96LM5">
    <property type="interactions" value="22"/>
</dbReference>
<dbReference type="MINT" id="Q96LM5"/>
<dbReference type="STRING" id="9606.ENSP00000412215"/>
<dbReference type="iPTMnet" id="Q96LM5"/>
<dbReference type="PhosphoSitePlus" id="Q96LM5"/>
<dbReference type="BioMuta" id="C4orf45"/>
<dbReference type="DMDM" id="296439413"/>
<dbReference type="MassIVE" id="Q96LM5"/>
<dbReference type="PaxDb" id="9606-ENSP00000412215"/>
<dbReference type="PeptideAtlas" id="Q96LM5"/>
<dbReference type="ProteomicsDB" id="77225"/>
<dbReference type="Antibodypedia" id="56684">
    <property type="antibodies" value="19 antibodies from 6 providers"/>
</dbReference>
<dbReference type="DNASU" id="152940"/>
<dbReference type="Ensembl" id="ENST00000434826.3">
    <property type="protein sequence ID" value="ENSP00000412215.2"/>
    <property type="gene ID" value="ENSG00000164123.7"/>
</dbReference>
<dbReference type="GeneID" id="152940"/>
<dbReference type="KEGG" id="hsa:152940"/>
<dbReference type="MANE-Select" id="ENST00000434826.3">
    <property type="protein sequence ID" value="ENSP00000412215.2"/>
    <property type="RefSeq nucleotide sequence ID" value="NM_152543.3"/>
    <property type="RefSeq protein sequence ID" value="NP_689756.2"/>
</dbReference>
<dbReference type="UCSC" id="uc003iqf.2">
    <property type="organism name" value="human"/>
</dbReference>
<dbReference type="AGR" id="HGNC:26342"/>
<dbReference type="CTD" id="152940"/>
<dbReference type="DisGeNET" id="152940"/>
<dbReference type="GeneCards" id="SPMIP2"/>
<dbReference type="HGNC" id="HGNC:26342">
    <property type="gene designation" value="SPMIP2"/>
</dbReference>
<dbReference type="HPA" id="ENSG00000164123">
    <property type="expression patterns" value="Tissue enriched (testis)"/>
</dbReference>
<dbReference type="neXtProt" id="NX_Q96LM5"/>
<dbReference type="OpenTargets" id="ENSG00000164123"/>
<dbReference type="PharmGKB" id="PA162379953"/>
<dbReference type="VEuPathDB" id="HostDB:ENSG00000164123"/>
<dbReference type="eggNOG" id="ENOG502S3MZ">
    <property type="taxonomic scope" value="Eukaryota"/>
</dbReference>
<dbReference type="GeneTree" id="ENSGT00390000012736"/>
<dbReference type="HOGENOM" id="CLU_105465_0_0_1"/>
<dbReference type="InParanoid" id="Q96LM5"/>
<dbReference type="OMA" id="DRRNSKW"/>
<dbReference type="OrthoDB" id="7834at9604"/>
<dbReference type="PAN-GO" id="Q96LM5">
    <property type="GO annotations" value="0 GO annotations based on evolutionary models"/>
</dbReference>
<dbReference type="PhylomeDB" id="Q96LM5"/>
<dbReference type="TreeFam" id="TF329701"/>
<dbReference type="PathwayCommons" id="Q96LM5"/>
<dbReference type="SignaLink" id="Q96LM5"/>
<dbReference type="BioGRID-ORCS" id="152940">
    <property type="hits" value="19 hits in 1115 CRISPR screens"/>
</dbReference>
<dbReference type="ChiTaRS" id="C4orf45">
    <property type="organism name" value="human"/>
</dbReference>
<dbReference type="GenomeRNAi" id="152940"/>
<dbReference type="Pharos" id="Q96LM5">
    <property type="development level" value="Tdark"/>
</dbReference>
<dbReference type="PRO" id="PR:Q96LM5"/>
<dbReference type="Proteomes" id="UP000005640">
    <property type="component" value="Chromosome 4"/>
</dbReference>
<dbReference type="RNAct" id="Q96LM5">
    <property type="molecule type" value="protein"/>
</dbReference>
<dbReference type="Bgee" id="ENSG00000164123">
    <property type="expression patterns" value="Expressed in sperm and 90 other cell types or tissues"/>
</dbReference>
<dbReference type="InterPro" id="IPR027814">
    <property type="entry name" value="DUF4562"/>
</dbReference>
<dbReference type="PANTHER" id="PTHR34833">
    <property type="entry name" value="GENE, 17359-RELATED"/>
    <property type="match status" value="1"/>
</dbReference>
<dbReference type="PANTHER" id="PTHR34833:SF1">
    <property type="entry name" value="GENE, 17359-RELATED"/>
    <property type="match status" value="1"/>
</dbReference>
<dbReference type="Pfam" id="PF15123">
    <property type="entry name" value="DUF4562"/>
    <property type="match status" value="1"/>
</dbReference>
<feature type="chain" id="PRO_0000325755" description="Protein SPMIP2">
    <location>
        <begin position="1"/>
        <end position="186"/>
    </location>
</feature>
<feature type="region of interest" description="Disordered" evidence="1">
    <location>
        <begin position="163"/>
        <end position="186"/>
    </location>
</feature>
<feature type="compositionally biased region" description="Basic residues" evidence="1">
    <location>
        <begin position="176"/>
        <end position="186"/>
    </location>
</feature>
<feature type="sequence variant" id="VAR_039901" description="In dbSNP:rs17037864.">
    <original>A</original>
    <variation>V</variation>
    <location>
        <position position="46"/>
    </location>
</feature>
<feature type="sequence variant" id="VAR_039902" description="In dbSNP:rs662473." evidence="2">
    <original>S</original>
    <variation>G</variation>
    <location>
        <position position="75"/>
    </location>
</feature>
<feature type="sequence variant" id="VAR_039903" description="In dbSNP:rs17037858.">
    <original>Y</original>
    <variation>C</variation>
    <location>
        <position position="84"/>
    </location>
</feature>
<feature type="sequence variant" id="VAR_039904" description="In dbSNP:rs619128." evidence="2">
    <original>G</original>
    <variation>E</variation>
    <location>
        <position position="93"/>
    </location>
</feature>
<feature type="sequence variant" id="VAR_039905" description="In dbSNP:rs10517695.">
    <original>R</original>
    <variation>H</variation>
    <location>
        <position position="134"/>
    </location>
</feature>
<feature type="sequence conflict" description="In Ref. 1; BAB71665." evidence="3" ref="1">
    <original>E</original>
    <variation>K</variation>
    <location>
        <position position="72"/>
    </location>
</feature>
<evidence type="ECO:0000256" key="1">
    <source>
        <dbReference type="SAM" id="MobiDB-lite"/>
    </source>
</evidence>
<evidence type="ECO:0000269" key="2">
    <source>
    </source>
</evidence>
<evidence type="ECO:0000305" key="3"/>
<evidence type="ECO:0000312" key="4">
    <source>
        <dbReference type="HGNC" id="HGNC:26342"/>
    </source>
</evidence>
<proteinExistence type="evidence at protein level"/>